<organism>
    <name type="scientific">Neisseria gonorrhoeae</name>
    <dbReference type="NCBI Taxonomy" id="485"/>
    <lineage>
        <taxon>Bacteria</taxon>
        <taxon>Pseudomonadati</taxon>
        <taxon>Pseudomonadota</taxon>
        <taxon>Betaproteobacteria</taxon>
        <taxon>Neisseriales</taxon>
        <taxon>Neisseriaceae</taxon>
        <taxon>Neisseria</taxon>
    </lineage>
</organism>
<protein>
    <recommendedName>
        <fullName>Cell division protein FtsX</fullName>
    </recommendedName>
</protein>
<evidence type="ECO:0000250" key="1"/>
<evidence type="ECO:0000255" key="2"/>
<evidence type="ECO:0000269" key="3">
    <source>
    </source>
</evidence>
<evidence type="ECO:0000305" key="4"/>
<name>FTSX_NEIGO</name>
<feature type="chain" id="PRO_0000166798" description="Cell division protein FtsX">
    <location>
        <begin position="1"/>
        <end position="305"/>
    </location>
</feature>
<feature type="topological domain" description="Cytoplasmic" evidence="2">
    <location>
        <begin position="1"/>
        <end position="28"/>
    </location>
</feature>
<feature type="transmembrane region" description="Helical" evidence="2">
    <location>
        <begin position="29"/>
        <end position="49"/>
    </location>
</feature>
<feature type="topological domain" description="Periplasmic" evidence="2">
    <location>
        <begin position="50"/>
        <end position="175"/>
    </location>
</feature>
<feature type="transmembrane region" description="Helical" evidence="2">
    <location>
        <begin position="176"/>
        <end position="196"/>
    </location>
</feature>
<feature type="topological domain" description="Cytoplasmic" evidence="2">
    <location>
        <begin position="197"/>
        <end position="229"/>
    </location>
</feature>
<feature type="transmembrane region" description="Helical" evidence="2">
    <location>
        <begin position="230"/>
        <end position="250"/>
    </location>
</feature>
<feature type="topological domain" description="Periplasmic" evidence="2">
    <location>
        <begin position="251"/>
        <end position="268"/>
    </location>
</feature>
<feature type="transmembrane region" description="Helical" evidence="2">
    <location>
        <begin position="269"/>
        <end position="289"/>
    </location>
</feature>
<feature type="topological domain" description="Cytoplasmic" evidence="2">
    <location>
        <begin position="290"/>
        <end position="305"/>
    </location>
</feature>
<proteinExistence type="inferred from homology"/>
<reference key="1">
    <citation type="journal article" date="2000" name="DNA Res.">
        <title>Genomic, transcriptional and phenotypic analysis of ftsE and ftsX of Neisseria gonorrhoeae.</title>
        <authorList>
            <person name="Bernatchez S."/>
            <person name="Francis F.M."/>
            <person name="Salimnia H."/>
            <person name="Beveridge T.J."/>
            <person name="Li H."/>
            <person name="Dillon J.-A.R."/>
        </authorList>
    </citation>
    <scope>NUCLEOTIDE SEQUENCE [GENOMIC DNA]</scope>
    <scope>IDENTIFICATION</scope>
    <scope>DISRUPTION PHENOTYPE</scope>
    <source>
        <strain>CH811</strain>
    </source>
</reference>
<sequence>MSIIHYFSLHVESARSALKQLLRQPFGTLLTLIMLAVAMTLPLFMYLGIQSGQSVLGKLNESPQITVYMETAAAQSDSDTVRSLLTRDKRLDNIRFIGKEDGLAELQSNLDQNLISMLDGNPLPDVFIVTPDPATTPAQMQAIYRDITKLPMVESASMDTEWVQTLYQINEFIRKILWFLSLTLGMAFVLVAHNTIRLQILSRKEEIEITKLLGAPASFIRRPFLYQAMWQSIFSAAVSLGLCGWLLSAVRPLVDAIFKPYGLNIGWRFFYVGELGLVFGFVIALGVFGAWLATTQHLLCFKAKK</sequence>
<keyword id="KW-0131">Cell cycle</keyword>
<keyword id="KW-0132">Cell division</keyword>
<keyword id="KW-0997">Cell inner membrane</keyword>
<keyword id="KW-1003">Cell membrane</keyword>
<keyword id="KW-0472">Membrane</keyword>
<keyword id="KW-0812">Transmembrane</keyword>
<keyword id="KW-1133">Transmembrane helix</keyword>
<accession>P95357</accession>
<dbReference type="EMBL" id="U76418">
    <property type="protein sequence ID" value="AAB36525.1"/>
    <property type="molecule type" value="Genomic_DNA"/>
</dbReference>
<dbReference type="RefSeq" id="WP_003688074.1">
    <property type="nucleotide sequence ID" value="NZ_WHPL01000002.1"/>
</dbReference>
<dbReference type="SMR" id="P95357"/>
<dbReference type="GeneID" id="66754195"/>
<dbReference type="GO" id="GO:0032153">
    <property type="term" value="C:cell division site"/>
    <property type="evidence" value="ECO:0007669"/>
    <property type="project" value="TreeGrafter"/>
</dbReference>
<dbReference type="GO" id="GO:0009276">
    <property type="term" value="C:Gram-negative-bacterium-type cell wall"/>
    <property type="evidence" value="ECO:0000250"/>
    <property type="project" value="UniProtKB"/>
</dbReference>
<dbReference type="GO" id="GO:0005886">
    <property type="term" value="C:plasma membrane"/>
    <property type="evidence" value="ECO:0007669"/>
    <property type="project" value="UniProtKB-SubCell"/>
</dbReference>
<dbReference type="GO" id="GO:0051301">
    <property type="term" value="P:cell division"/>
    <property type="evidence" value="ECO:0000315"/>
    <property type="project" value="UniProtKB"/>
</dbReference>
<dbReference type="GO" id="GO:0043093">
    <property type="term" value="P:FtsZ-dependent cytokinesis"/>
    <property type="evidence" value="ECO:0000315"/>
    <property type="project" value="UniProtKB"/>
</dbReference>
<dbReference type="Gene3D" id="3.30.70.3040">
    <property type="match status" value="1"/>
</dbReference>
<dbReference type="InterPro" id="IPR003838">
    <property type="entry name" value="ABC3_permease_C"/>
</dbReference>
<dbReference type="InterPro" id="IPR004513">
    <property type="entry name" value="FtsX"/>
</dbReference>
<dbReference type="InterPro" id="IPR040690">
    <property type="entry name" value="FtsX_ECD"/>
</dbReference>
<dbReference type="InterPro" id="IPR047590">
    <property type="entry name" value="FtsX_proteobact"/>
</dbReference>
<dbReference type="NCBIfam" id="TIGR00439">
    <property type="entry name" value="FtsX_Gneg"/>
    <property type="match status" value="1"/>
</dbReference>
<dbReference type="PANTHER" id="PTHR47755">
    <property type="entry name" value="CELL DIVISION PROTEIN FTSX"/>
    <property type="match status" value="1"/>
</dbReference>
<dbReference type="PANTHER" id="PTHR47755:SF1">
    <property type="entry name" value="CELL DIVISION PROTEIN FTSX"/>
    <property type="match status" value="1"/>
</dbReference>
<dbReference type="Pfam" id="PF02687">
    <property type="entry name" value="FtsX"/>
    <property type="match status" value="1"/>
</dbReference>
<dbReference type="Pfam" id="PF18075">
    <property type="entry name" value="FtsX_ECD"/>
    <property type="match status" value="1"/>
</dbReference>
<dbReference type="PIRSF" id="PIRSF003097">
    <property type="entry name" value="FtsX"/>
    <property type="match status" value="1"/>
</dbReference>
<comment type="function">
    <text evidence="1">Part of the ABC transporter FtsEX involved in cellular division.</text>
</comment>
<comment type="subunit">
    <text evidence="1">Forms a membrane-associated complex with FtsE.</text>
</comment>
<comment type="subcellular location">
    <subcellularLocation>
        <location evidence="1">Cell inner membrane</location>
        <topology evidence="1">Multi-pass membrane protein</topology>
    </subcellularLocation>
</comment>
<comment type="disruption phenotype">
    <text evidence="3">Viable. Exhibits morphological abnormalities indicative of defective division sites. While division in wild-type cells occurs along sequential, alternating division planes, the mutant is characterized by the presence of multiple and atypically arranged division sites which frequently divide the cytoplasm into small cellular compartments. In wild-type cells, the replication and segregation of DNA precedes the ingrowth of a septum resulting in two equally sized daughter cells, the process of which is not seen in mutant cells. Presence of large vacuole-like spaces in the cytoplasm which appear to be filled with condensed DNA (but few ribosomes) that has not been able to correctly segregate during cell division.</text>
</comment>
<comment type="similarity">
    <text evidence="4">Belongs to the ABC-4 integral membrane protein family. FtsX subfamily.</text>
</comment>
<gene>
    <name type="primary">ftsX</name>
</gene>